<protein>
    <recommendedName>
        <fullName evidence="1">Phosphoglycerate kinase</fullName>
        <ecNumber evidence="1">2.7.2.3</ecNumber>
    </recommendedName>
</protein>
<dbReference type="EC" id="2.7.2.3" evidence="1"/>
<dbReference type="EMBL" id="CP001111">
    <property type="protein sequence ID" value="ACF52915.1"/>
    <property type="molecule type" value="Genomic_DNA"/>
</dbReference>
<dbReference type="RefSeq" id="WP_012511960.1">
    <property type="nucleotide sequence ID" value="NC_011071.1"/>
</dbReference>
<dbReference type="SMR" id="B4STV2"/>
<dbReference type="STRING" id="391008.Smal_3216"/>
<dbReference type="KEGG" id="smt:Smal_3216"/>
<dbReference type="eggNOG" id="COG0126">
    <property type="taxonomic scope" value="Bacteria"/>
</dbReference>
<dbReference type="HOGENOM" id="CLU_025427_0_2_6"/>
<dbReference type="OrthoDB" id="9808460at2"/>
<dbReference type="UniPathway" id="UPA00109">
    <property type="reaction ID" value="UER00185"/>
</dbReference>
<dbReference type="Proteomes" id="UP000001867">
    <property type="component" value="Chromosome"/>
</dbReference>
<dbReference type="GO" id="GO:0005829">
    <property type="term" value="C:cytosol"/>
    <property type="evidence" value="ECO:0007669"/>
    <property type="project" value="TreeGrafter"/>
</dbReference>
<dbReference type="GO" id="GO:0043531">
    <property type="term" value="F:ADP binding"/>
    <property type="evidence" value="ECO:0007669"/>
    <property type="project" value="TreeGrafter"/>
</dbReference>
<dbReference type="GO" id="GO:0005524">
    <property type="term" value="F:ATP binding"/>
    <property type="evidence" value="ECO:0007669"/>
    <property type="project" value="UniProtKB-KW"/>
</dbReference>
<dbReference type="GO" id="GO:0004618">
    <property type="term" value="F:phosphoglycerate kinase activity"/>
    <property type="evidence" value="ECO:0007669"/>
    <property type="project" value="UniProtKB-UniRule"/>
</dbReference>
<dbReference type="GO" id="GO:0006094">
    <property type="term" value="P:gluconeogenesis"/>
    <property type="evidence" value="ECO:0007669"/>
    <property type="project" value="TreeGrafter"/>
</dbReference>
<dbReference type="GO" id="GO:0006096">
    <property type="term" value="P:glycolytic process"/>
    <property type="evidence" value="ECO:0007669"/>
    <property type="project" value="UniProtKB-UniRule"/>
</dbReference>
<dbReference type="FunFam" id="3.40.50.1260:FF:000001">
    <property type="entry name" value="Phosphoglycerate kinase"/>
    <property type="match status" value="1"/>
</dbReference>
<dbReference type="FunFam" id="3.40.50.1260:FF:000002">
    <property type="entry name" value="Phosphoglycerate kinase"/>
    <property type="match status" value="1"/>
</dbReference>
<dbReference type="Gene3D" id="3.40.50.1260">
    <property type="entry name" value="Phosphoglycerate kinase, N-terminal domain"/>
    <property type="match status" value="2"/>
</dbReference>
<dbReference type="HAMAP" id="MF_00145">
    <property type="entry name" value="Phosphoglyc_kinase"/>
    <property type="match status" value="1"/>
</dbReference>
<dbReference type="InterPro" id="IPR001576">
    <property type="entry name" value="Phosphoglycerate_kinase"/>
</dbReference>
<dbReference type="InterPro" id="IPR015911">
    <property type="entry name" value="Phosphoglycerate_kinase_CS"/>
</dbReference>
<dbReference type="InterPro" id="IPR015824">
    <property type="entry name" value="Phosphoglycerate_kinase_N"/>
</dbReference>
<dbReference type="InterPro" id="IPR036043">
    <property type="entry name" value="Phosphoglycerate_kinase_sf"/>
</dbReference>
<dbReference type="PANTHER" id="PTHR11406">
    <property type="entry name" value="PHOSPHOGLYCERATE KINASE"/>
    <property type="match status" value="1"/>
</dbReference>
<dbReference type="PANTHER" id="PTHR11406:SF23">
    <property type="entry name" value="PHOSPHOGLYCERATE KINASE 1, CHLOROPLASTIC-RELATED"/>
    <property type="match status" value="1"/>
</dbReference>
<dbReference type="Pfam" id="PF00162">
    <property type="entry name" value="PGK"/>
    <property type="match status" value="1"/>
</dbReference>
<dbReference type="PIRSF" id="PIRSF000724">
    <property type="entry name" value="Pgk"/>
    <property type="match status" value="1"/>
</dbReference>
<dbReference type="PRINTS" id="PR00477">
    <property type="entry name" value="PHGLYCKINASE"/>
</dbReference>
<dbReference type="SUPFAM" id="SSF53748">
    <property type="entry name" value="Phosphoglycerate kinase"/>
    <property type="match status" value="1"/>
</dbReference>
<dbReference type="PROSITE" id="PS00111">
    <property type="entry name" value="PGLYCERATE_KINASE"/>
    <property type="match status" value="1"/>
</dbReference>
<feature type="chain" id="PRO_1000096380" description="Phosphoglycerate kinase">
    <location>
        <begin position="1"/>
        <end position="391"/>
    </location>
</feature>
<feature type="binding site" evidence="1">
    <location>
        <begin position="21"/>
        <end position="23"/>
    </location>
    <ligand>
        <name>substrate</name>
    </ligand>
</feature>
<feature type="binding site" evidence="1">
    <location>
        <position position="36"/>
    </location>
    <ligand>
        <name>substrate</name>
    </ligand>
</feature>
<feature type="binding site" evidence="1">
    <location>
        <begin position="59"/>
        <end position="62"/>
    </location>
    <ligand>
        <name>substrate</name>
    </ligand>
</feature>
<feature type="binding site" evidence="1">
    <location>
        <position position="113"/>
    </location>
    <ligand>
        <name>substrate</name>
    </ligand>
</feature>
<feature type="binding site" evidence="1">
    <location>
        <position position="146"/>
    </location>
    <ligand>
        <name>substrate</name>
    </ligand>
</feature>
<feature type="binding site" evidence="1">
    <location>
        <position position="197"/>
    </location>
    <ligand>
        <name>ATP</name>
        <dbReference type="ChEBI" id="CHEBI:30616"/>
    </ligand>
</feature>
<feature type="binding site" evidence="1">
    <location>
        <position position="319"/>
    </location>
    <ligand>
        <name>ATP</name>
        <dbReference type="ChEBI" id="CHEBI:30616"/>
    </ligand>
</feature>
<feature type="binding site" evidence="1">
    <location>
        <begin position="345"/>
        <end position="348"/>
    </location>
    <ligand>
        <name>ATP</name>
        <dbReference type="ChEBI" id="CHEBI:30616"/>
    </ligand>
</feature>
<keyword id="KW-0067">ATP-binding</keyword>
<keyword id="KW-0963">Cytoplasm</keyword>
<keyword id="KW-0324">Glycolysis</keyword>
<keyword id="KW-0418">Kinase</keyword>
<keyword id="KW-0547">Nucleotide-binding</keyword>
<keyword id="KW-0808">Transferase</keyword>
<accession>B4STV2</accession>
<organism>
    <name type="scientific">Stenotrophomonas maltophilia (strain R551-3)</name>
    <dbReference type="NCBI Taxonomy" id="391008"/>
    <lineage>
        <taxon>Bacteria</taxon>
        <taxon>Pseudomonadati</taxon>
        <taxon>Pseudomonadota</taxon>
        <taxon>Gammaproteobacteria</taxon>
        <taxon>Lysobacterales</taxon>
        <taxon>Lysobacteraceae</taxon>
        <taxon>Stenotrophomonas</taxon>
        <taxon>Stenotrophomonas maltophilia group</taxon>
    </lineage>
</organism>
<proteinExistence type="inferred from homology"/>
<sequence>MSIVRMTDLDLSGKRVLIRQDLNVPIENGRITSEQRITASLPTLKRALEQGAAVMVTSHLGRPKEGVWSEADSLAPVAQRLSELLGREVPLVRDWVDGVDVQPGQLVLLENCRMNVGEGKDDEALSKKYAALCDVFVMDAFGTAHRAQASTHGVIRFAPVAAGGPLLMAELDALAQALDAPAKPLLAIVAGSKVSTKLELLASLVGKVDQLIVGGGIANTFIAAAGYNVGKSLYEPDLLDTAKKIVADAKARGADIPLPVDVVTAKQFLPDAVAEVKAVDAVAEDDLILDIGPQTAAQYAQLIENAGTVVWNGPVGVFEFEAFSKGTEALARAIASSNAFSIAGGGDTLAAVDKFDIAAQVSYISTGGGAFLEFLEGKTLPAVAALDARGA</sequence>
<comment type="catalytic activity">
    <reaction evidence="1">
        <text>(2R)-3-phosphoglycerate + ATP = (2R)-3-phospho-glyceroyl phosphate + ADP</text>
        <dbReference type="Rhea" id="RHEA:14801"/>
        <dbReference type="ChEBI" id="CHEBI:30616"/>
        <dbReference type="ChEBI" id="CHEBI:57604"/>
        <dbReference type="ChEBI" id="CHEBI:58272"/>
        <dbReference type="ChEBI" id="CHEBI:456216"/>
        <dbReference type="EC" id="2.7.2.3"/>
    </reaction>
</comment>
<comment type="pathway">
    <text evidence="1">Carbohydrate degradation; glycolysis; pyruvate from D-glyceraldehyde 3-phosphate: step 2/5.</text>
</comment>
<comment type="subunit">
    <text evidence="1">Monomer.</text>
</comment>
<comment type="subcellular location">
    <subcellularLocation>
        <location evidence="1">Cytoplasm</location>
    </subcellularLocation>
</comment>
<comment type="similarity">
    <text evidence="1">Belongs to the phosphoglycerate kinase family.</text>
</comment>
<evidence type="ECO:0000255" key="1">
    <source>
        <dbReference type="HAMAP-Rule" id="MF_00145"/>
    </source>
</evidence>
<reference key="1">
    <citation type="submission" date="2008-06" db="EMBL/GenBank/DDBJ databases">
        <title>Complete sequence of Stenotrophomonas maltophilia R551-3.</title>
        <authorList>
            <consortium name="US DOE Joint Genome Institute"/>
            <person name="Lucas S."/>
            <person name="Copeland A."/>
            <person name="Lapidus A."/>
            <person name="Glavina del Rio T."/>
            <person name="Dalin E."/>
            <person name="Tice H."/>
            <person name="Pitluck S."/>
            <person name="Chain P."/>
            <person name="Malfatti S."/>
            <person name="Shin M."/>
            <person name="Vergez L."/>
            <person name="Lang D."/>
            <person name="Schmutz J."/>
            <person name="Larimer F."/>
            <person name="Land M."/>
            <person name="Hauser L."/>
            <person name="Kyrpides N."/>
            <person name="Mikhailova N."/>
            <person name="Taghavi S."/>
            <person name="Monchy S."/>
            <person name="Newman L."/>
            <person name="Vangronsveld J."/>
            <person name="van der Lelie D."/>
            <person name="Richardson P."/>
        </authorList>
    </citation>
    <scope>NUCLEOTIDE SEQUENCE [LARGE SCALE GENOMIC DNA]</scope>
    <source>
        <strain>R551-3</strain>
    </source>
</reference>
<name>PGK_STRM5</name>
<gene>
    <name evidence="1" type="primary">pgk</name>
    <name type="ordered locus">Smal_3216</name>
</gene>